<dbReference type="EC" id="3.1.26.4" evidence="1"/>
<dbReference type="EMBL" id="CP000672">
    <property type="protein sequence ID" value="ABR00593.1"/>
    <property type="molecule type" value="Genomic_DNA"/>
</dbReference>
<dbReference type="SMR" id="A5UII7"/>
<dbReference type="KEGG" id="hiq:CGSHiGG_08925"/>
<dbReference type="HOGENOM" id="CLU_036532_3_2_6"/>
<dbReference type="Proteomes" id="UP000001990">
    <property type="component" value="Chromosome"/>
</dbReference>
<dbReference type="GO" id="GO:0005737">
    <property type="term" value="C:cytoplasm"/>
    <property type="evidence" value="ECO:0007669"/>
    <property type="project" value="UniProtKB-SubCell"/>
</dbReference>
<dbReference type="GO" id="GO:0032299">
    <property type="term" value="C:ribonuclease H2 complex"/>
    <property type="evidence" value="ECO:0007669"/>
    <property type="project" value="TreeGrafter"/>
</dbReference>
<dbReference type="GO" id="GO:0030145">
    <property type="term" value="F:manganese ion binding"/>
    <property type="evidence" value="ECO:0007669"/>
    <property type="project" value="UniProtKB-UniRule"/>
</dbReference>
<dbReference type="GO" id="GO:0003723">
    <property type="term" value="F:RNA binding"/>
    <property type="evidence" value="ECO:0007669"/>
    <property type="project" value="InterPro"/>
</dbReference>
<dbReference type="GO" id="GO:0004523">
    <property type="term" value="F:RNA-DNA hybrid ribonuclease activity"/>
    <property type="evidence" value="ECO:0007669"/>
    <property type="project" value="UniProtKB-UniRule"/>
</dbReference>
<dbReference type="GO" id="GO:0043137">
    <property type="term" value="P:DNA replication, removal of RNA primer"/>
    <property type="evidence" value="ECO:0007669"/>
    <property type="project" value="TreeGrafter"/>
</dbReference>
<dbReference type="GO" id="GO:0006298">
    <property type="term" value="P:mismatch repair"/>
    <property type="evidence" value="ECO:0007669"/>
    <property type="project" value="TreeGrafter"/>
</dbReference>
<dbReference type="CDD" id="cd07182">
    <property type="entry name" value="RNase_HII_bacteria_HII_like"/>
    <property type="match status" value="1"/>
</dbReference>
<dbReference type="FunFam" id="3.30.420.10:FF:000006">
    <property type="entry name" value="Ribonuclease HII"/>
    <property type="match status" value="1"/>
</dbReference>
<dbReference type="Gene3D" id="3.30.420.10">
    <property type="entry name" value="Ribonuclease H-like superfamily/Ribonuclease H"/>
    <property type="match status" value="1"/>
</dbReference>
<dbReference type="HAMAP" id="MF_00052_B">
    <property type="entry name" value="RNase_HII_B"/>
    <property type="match status" value="1"/>
</dbReference>
<dbReference type="InterPro" id="IPR022898">
    <property type="entry name" value="RNase_HII"/>
</dbReference>
<dbReference type="InterPro" id="IPR001352">
    <property type="entry name" value="RNase_HII/HIII"/>
</dbReference>
<dbReference type="InterPro" id="IPR024567">
    <property type="entry name" value="RNase_HII/HIII_dom"/>
</dbReference>
<dbReference type="InterPro" id="IPR012337">
    <property type="entry name" value="RNaseH-like_sf"/>
</dbReference>
<dbReference type="InterPro" id="IPR036397">
    <property type="entry name" value="RNaseH_sf"/>
</dbReference>
<dbReference type="NCBIfam" id="NF000594">
    <property type="entry name" value="PRK00015.1-1"/>
    <property type="match status" value="1"/>
</dbReference>
<dbReference type="NCBIfam" id="NF000595">
    <property type="entry name" value="PRK00015.1-3"/>
    <property type="match status" value="1"/>
</dbReference>
<dbReference type="NCBIfam" id="NF000596">
    <property type="entry name" value="PRK00015.1-4"/>
    <property type="match status" value="1"/>
</dbReference>
<dbReference type="PANTHER" id="PTHR10954">
    <property type="entry name" value="RIBONUCLEASE H2 SUBUNIT A"/>
    <property type="match status" value="1"/>
</dbReference>
<dbReference type="PANTHER" id="PTHR10954:SF18">
    <property type="entry name" value="RIBONUCLEASE HII"/>
    <property type="match status" value="1"/>
</dbReference>
<dbReference type="Pfam" id="PF01351">
    <property type="entry name" value="RNase_HII"/>
    <property type="match status" value="1"/>
</dbReference>
<dbReference type="SUPFAM" id="SSF53098">
    <property type="entry name" value="Ribonuclease H-like"/>
    <property type="match status" value="1"/>
</dbReference>
<dbReference type="PROSITE" id="PS51975">
    <property type="entry name" value="RNASE_H_2"/>
    <property type="match status" value="1"/>
</dbReference>
<keyword id="KW-0963">Cytoplasm</keyword>
<keyword id="KW-0255">Endonuclease</keyword>
<keyword id="KW-0378">Hydrolase</keyword>
<keyword id="KW-0464">Manganese</keyword>
<keyword id="KW-0479">Metal-binding</keyword>
<keyword id="KW-0540">Nuclease</keyword>
<comment type="function">
    <text evidence="1">Endonuclease that specifically degrades the RNA of RNA-DNA hybrids.</text>
</comment>
<comment type="catalytic activity">
    <reaction evidence="1">
        <text>Endonucleolytic cleavage to 5'-phosphomonoester.</text>
        <dbReference type="EC" id="3.1.26.4"/>
    </reaction>
</comment>
<comment type="cofactor">
    <cofactor evidence="1">
        <name>Mn(2+)</name>
        <dbReference type="ChEBI" id="CHEBI:29035"/>
    </cofactor>
    <cofactor evidence="1">
        <name>Mg(2+)</name>
        <dbReference type="ChEBI" id="CHEBI:18420"/>
    </cofactor>
    <text evidence="1">Manganese or magnesium. Binds 1 divalent metal ion per monomer in the absence of substrate. May bind a second metal ion after substrate binding.</text>
</comment>
<comment type="subcellular location">
    <subcellularLocation>
        <location evidence="1">Cytoplasm</location>
    </subcellularLocation>
</comment>
<comment type="similarity">
    <text evidence="1">Belongs to the RNase HII family.</text>
</comment>
<accession>A5UII7</accession>
<feature type="chain" id="PRO_1000031149" description="Ribonuclease HII">
    <location>
        <begin position="1"/>
        <end position="197"/>
    </location>
</feature>
<feature type="domain" description="RNase H type-2" evidence="2">
    <location>
        <begin position="9"/>
        <end position="197"/>
    </location>
</feature>
<feature type="binding site" evidence="1">
    <location>
        <position position="15"/>
    </location>
    <ligand>
        <name>a divalent metal cation</name>
        <dbReference type="ChEBI" id="CHEBI:60240"/>
    </ligand>
</feature>
<feature type="binding site" evidence="1">
    <location>
        <position position="16"/>
    </location>
    <ligand>
        <name>a divalent metal cation</name>
        <dbReference type="ChEBI" id="CHEBI:60240"/>
    </ligand>
</feature>
<feature type="binding site" evidence="1">
    <location>
        <position position="107"/>
    </location>
    <ligand>
        <name>a divalent metal cation</name>
        <dbReference type="ChEBI" id="CHEBI:60240"/>
    </ligand>
</feature>
<sequence length="197" mass="21550">MFEYPQGYELIAGVDEVGRGPLVGAVVTAAVILDPNNPIEGLADSKKLSEKKRLALADEIKEKALAWALGRAEANEIDEINILQASLLAMTRAVKSLKIQPHFVLVDGNKIPKDLAIPAQAVVKGDSIVAEISAASILAKVARDQEMEELDKQYPEYAFAQHKGYPTKLHLEKLAEFGALPQHRRSFAPVKKALEQF</sequence>
<evidence type="ECO:0000255" key="1">
    <source>
        <dbReference type="HAMAP-Rule" id="MF_00052"/>
    </source>
</evidence>
<evidence type="ECO:0000255" key="2">
    <source>
        <dbReference type="PROSITE-ProRule" id="PRU01319"/>
    </source>
</evidence>
<proteinExistence type="inferred from homology"/>
<protein>
    <recommendedName>
        <fullName evidence="1">Ribonuclease HII</fullName>
        <shortName evidence="1">RNase HII</shortName>
        <ecNumber evidence="1">3.1.26.4</ecNumber>
    </recommendedName>
</protein>
<organism>
    <name type="scientific">Haemophilus influenzae (strain PittGG)</name>
    <dbReference type="NCBI Taxonomy" id="374931"/>
    <lineage>
        <taxon>Bacteria</taxon>
        <taxon>Pseudomonadati</taxon>
        <taxon>Pseudomonadota</taxon>
        <taxon>Gammaproteobacteria</taxon>
        <taxon>Pasteurellales</taxon>
        <taxon>Pasteurellaceae</taxon>
        <taxon>Haemophilus</taxon>
    </lineage>
</organism>
<reference key="1">
    <citation type="journal article" date="2007" name="Genome Biol.">
        <title>Characterization and modeling of the Haemophilus influenzae core and supragenomes based on the complete genomic sequences of Rd and 12 clinical nontypeable strains.</title>
        <authorList>
            <person name="Hogg J.S."/>
            <person name="Hu F.Z."/>
            <person name="Janto B."/>
            <person name="Boissy R."/>
            <person name="Hayes J."/>
            <person name="Keefe R."/>
            <person name="Post J.C."/>
            <person name="Ehrlich G.D."/>
        </authorList>
    </citation>
    <scope>NUCLEOTIDE SEQUENCE [LARGE SCALE GENOMIC DNA]</scope>
    <source>
        <strain>PittGG</strain>
    </source>
</reference>
<name>RNH2_HAEIG</name>
<gene>
    <name evidence="1" type="primary">rnhB</name>
    <name type="ordered locus">CGSHiGG_08925</name>
</gene>